<protein>
    <recommendedName>
        <fullName>Uncharacterized protein DDB_G0288629</fullName>
    </recommendedName>
</protein>
<sequence length="263" mass="30152">MTESEVSTPTVAPPVISLADNADTIKLYSKYIVPENTPFKTTDKQTLMDNCAFFAKMFVNLSAMAFSTLEPLDKKETKELSKKEKKQLKKEKKALKKENKGGKDKKDKKDKKDKKDKKDKKDKKDKGDKKDKKEKKEKKHDDDKSEVKEKKEKKEKEDRTIVEIRNTKSILDASSTSVSRFAPCMMFVNCPSGPAGLECRILKDTSIAKLKSEICWNQYLTNLVQCQERGLSKCFSKFVDLQKTCKQTEIPKKSFSLFDSLSY</sequence>
<name>Y8028_DICDI</name>
<accession>Q54IN6</accession>
<feature type="chain" id="PRO_0000346979" description="Uncharacterized protein DDB_G0288629">
    <location>
        <begin position="1"/>
        <end position="263"/>
    </location>
</feature>
<feature type="region of interest" description="Disordered" evidence="2">
    <location>
        <begin position="76"/>
        <end position="158"/>
    </location>
</feature>
<feature type="coiled-coil region" evidence="1">
    <location>
        <begin position="72"/>
        <end position="168"/>
    </location>
</feature>
<feature type="compositionally biased region" description="Basic residues" evidence="2">
    <location>
        <begin position="83"/>
        <end position="95"/>
    </location>
</feature>
<feature type="compositionally biased region" description="Basic and acidic residues" evidence="2">
    <location>
        <begin position="96"/>
        <end position="107"/>
    </location>
</feature>
<feature type="compositionally biased region" description="Basic residues" evidence="2">
    <location>
        <begin position="108"/>
        <end position="121"/>
    </location>
</feature>
<feature type="compositionally biased region" description="Basic and acidic residues" evidence="2">
    <location>
        <begin position="122"/>
        <end position="131"/>
    </location>
</feature>
<feature type="compositionally biased region" description="Basic and acidic residues" evidence="2">
    <location>
        <begin position="139"/>
        <end position="158"/>
    </location>
</feature>
<gene>
    <name type="ORF">DDB_G0288629</name>
</gene>
<keyword id="KW-0175">Coiled coil</keyword>
<keyword id="KW-1185">Reference proteome</keyword>
<evidence type="ECO:0000255" key="1"/>
<evidence type="ECO:0000256" key="2">
    <source>
        <dbReference type="SAM" id="MobiDB-lite"/>
    </source>
</evidence>
<reference key="1">
    <citation type="journal article" date="2005" name="Nature">
        <title>The genome of the social amoeba Dictyostelium discoideum.</title>
        <authorList>
            <person name="Eichinger L."/>
            <person name="Pachebat J.A."/>
            <person name="Gloeckner G."/>
            <person name="Rajandream M.A."/>
            <person name="Sucgang R."/>
            <person name="Berriman M."/>
            <person name="Song J."/>
            <person name="Olsen R."/>
            <person name="Szafranski K."/>
            <person name="Xu Q."/>
            <person name="Tunggal B."/>
            <person name="Kummerfeld S."/>
            <person name="Madera M."/>
            <person name="Konfortov B.A."/>
            <person name="Rivero F."/>
            <person name="Bankier A.T."/>
            <person name="Lehmann R."/>
            <person name="Hamlin N."/>
            <person name="Davies R."/>
            <person name="Gaudet P."/>
            <person name="Fey P."/>
            <person name="Pilcher K."/>
            <person name="Chen G."/>
            <person name="Saunders D."/>
            <person name="Sodergren E.J."/>
            <person name="Davis P."/>
            <person name="Kerhornou A."/>
            <person name="Nie X."/>
            <person name="Hall N."/>
            <person name="Anjard C."/>
            <person name="Hemphill L."/>
            <person name="Bason N."/>
            <person name="Farbrother P."/>
            <person name="Desany B."/>
            <person name="Just E."/>
            <person name="Morio T."/>
            <person name="Rost R."/>
            <person name="Churcher C.M."/>
            <person name="Cooper J."/>
            <person name="Haydock S."/>
            <person name="van Driessche N."/>
            <person name="Cronin A."/>
            <person name="Goodhead I."/>
            <person name="Muzny D.M."/>
            <person name="Mourier T."/>
            <person name="Pain A."/>
            <person name="Lu M."/>
            <person name="Harper D."/>
            <person name="Lindsay R."/>
            <person name="Hauser H."/>
            <person name="James K.D."/>
            <person name="Quiles M."/>
            <person name="Madan Babu M."/>
            <person name="Saito T."/>
            <person name="Buchrieser C."/>
            <person name="Wardroper A."/>
            <person name="Felder M."/>
            <person name="Thangavelu M."/>
            <person name="Johnson D."/>
            <person name="Knights A."/>
            <person name="Loulseged H."/>
            <person name="Mungall K.L."/>
            <person name="Oliver K."/>
            <person name="Price C."/>
            <person name="Quail M.A."/>
            <person name="Urushihara H."/>
            <person name="Hernandez J."/>
            <person name="Rabbinowitsch E."/>
            <person name="Steffen D."/>
            <person name="Sanders M."/>
            <person name="Ma J."/>
            <person name="Kohara Y."/>
            <person name="Sharp S."/>
            <person name="Simmonds M.N."/>
            <person name="Spiegler S."/>
            <person name="Tivey A."/>
            <person name="Sugano S."/>
            <person name="White B."/>
            <person name="Walker D."/>
            <person name="Woodward J.R."/>
            <person name="Winckler T."/>
            <person name="Tanaka Y."/>
            <person name="Shaulsky G."/>
            <person name="Schleicher M."/>
            <person name="Weinstock G.M."/>
            <person name="Rosenthal A."/>
            <person name="Cox E.C."/>
            <person name="Chisholm R.L."/>
            <person name="Gibbs R.A."/>
            <person name="Loomis W.F."/>
            <person name="Platzer M."/>
            <person name="Kay R.R."/>
            <person name="Williams J.G."/>
            <person name="Dear P.H."/>
            <person name="Noegel A.A."/>
            <person name="Barrell B.G."/>
            <person name="Kuspa A."/>
        </authorList>
    </citation>
    <scope>NUCLEOTIDE SEQUENCE [LARGE SCALE GENOMIC DNA]</scope>
    <source>
        <strain>AX4</strain>
    </source>
</reference>
<organism>
    <name type="scientific">Dictyostelium discoideum</name>
    <name type="common">Social amoeba</name>
    <dbReference type="NCBI Taxonomy" id="44689"/>
    <lineage>
        <taxon>Eukaryota</taxon>
        <taxon>Amoebozoa</taxon>
        <taxon>Evosea</taxon>
        <taxon>Eumycetozoa</taxon>
        <taxon>Dictyostelia</taxon>
        <taxon>Dictyosteliales</taxon>
        <taxon>Dictyosteliaceae</taxon>
        <taxon>Dictyostelium</taxon>
    </lineage>
</organism>
<proteinExistence type="predicted"/>
<dbReference type="EMBL" id="AAFI02000119">
    <property type="protein sequence ID" value="EAL63118.1"/>
    <property type="molecule type" value="Genomic_DNA"/>
</dbReference>
<dbReference type="RefSeq" id="XP_636622.1">
    <property type="nucleotide sequence ID" value="XM_631530.1"/>
</dbReference>
<dbReference type="FunCoup" id="Q54IN6">
    <property type="interactions" value="877"/>
</dbReference>
<dbReference type="PaxDb" id="44689-DDB0188028"/>
<dbReference type="EnsemblProtists" id="EAL63118">
    <property type="protein sequence ID" value="EAL63118"/>
    <property type="gene ID" value="DDB_G0288629"/>
</dbReference>
<dbReference type="GeneID" id="8626724"/>
<dbReference type="KEGG" id="ddi:DDB_G0288629"/>
<dbReference type="dictyBase" id="DDB_G0288629"/>
<dbReference type="VEuPathDB" id="AmoebaDB:DDB_G0288629"/>
<dbReference type="eggNOG" id="ENOG502RDVQ">
    <property type="taxonomic scope" value="Eukaryota"/>
</dbReference>
<dbReference type="HOGENOM" id="CLU_1059334_0_0_1"/>
<dbReference type="InParanoid" id="Q54IN6"/>
<dbReference type="OMA" id="NCAFFAK"/>
<dbReference type="PRO" id="PR:Q54IN6"/>
<dbReference type="Proteomes" id="UP000002195">
    <property type="component" value="Chromosome 5"/>
</dbReference>